<protein>
    <recommendedName>
        <fullName evidence="1">Acetylglutamate kinase</fullName>
        <ecNumber evidence="1">2.7.2.8</ecNumber>
    </recommendedName>
    <alternativeName>
        <fullName evidence="1">N-acetyl-L-glutamate 5-phosphotransferase</fullName>
    </alternativeName>
    <alternativeName>
        <fullName evidence="1">NAG kinase</fullName>
        <shortName evidence="1">NAGK</shortName>
    </alternativeName>
</protein>
<gene>
    <name evidence="1" type="primary">argB</name>
    <name type="ordered locus">LMOf2365_1611</name>
</gene>
<name>ARGB_LISMF</name>
<comment type="function">
    <text evidence="1">Catalyzes the ATP-dependent phosphorylation of N-acetyl-L-glutamate.</text>
</comment>
<comment type="catalytic activity">
    <reaction evidence="1">
        <text>N-acetyl-L-glutamate + ATP = N-acetyl-L-glutamyl 5-phosphate + ADP</text>
        <dbReference type="Rhea" id="RHEA:14629"/>
        <dbReference type="ChEBI" id="CHEBI:30616"/>
        <dbReference type="ChEBI" id="CHEBI:44337"/>
        <dbReference type="ChEBI" id="CHEBI:57936"/>
        <dbReference type="ChEBI" id="CHEBI:456216"/>
        <dbReference type="EC" id="2.7.2.8"/>
    </reaction>
</comment>
<comment type="pathway">
    <text evidence="1">Amino-acid biosynthesis; L-arginine biosynthesis; N(2)-acetyl-L-ornithine from L-glutamate: step 2/4.</text>
</comment>
<comment type="subcellular location">
    <subcellularLocation>
        <location evidence="1">Cytoplasm</location>
    </subcellularLocation>
</comment>
<comment type="similarity">
    <text evidence="1">Belongs to the acetylglutamate kinase family. ArgB subfamily.</text>
</comment>
<sequence length="250" mass="26501">MENTIVVKLGGVASDNLTEDFFQQIIQWQAANKKIVLVHGGGHYITKMMKSLAIPVETKNGLRVTNKATLEVTKMVLIGQVQPAITTAFQKRNISVIGLNAGDTGLLEADFLNDANLGFVGKITKVKTDLIEQLLSENIITVIAPLGINSEYDWLNVNADTAACEVASALQAEALYLLTDVPGVKKGSEIIGEIATDEIEKLQNAGVIKGGMIPKLASAAFAAENGVGKVIITDSLNTSGTKIKNKVAIG</sequence>
<reference key="1">
    <citation type="journal article" date="2004" name="Nucleic Acids Res.">
        <title>Whole genome comparisons of serotype 4b and 1/2a strains of the food-borne pathogen Listeria monocytogenes reveal new insights into the core genome components of this species.</title>
        <authorList>
            <person name="Nelson K.E."/>
            <person name="Fouts D.E."/>
            <person name="Mongodin E.F."/>
            <person name="Ravel J."/>
            <person name="DeBoy R.T."/>
            <person name="Kolonay J.F."/>
            <person name="Rasko D.A."/>
            <person name="Angiuoli S.V."/>
            <person name="Gill S.R."/>
            <person name="Paulsen I.T."/>
            <person name="Peterson J.D."/>
            <person name="White O."/>
            <person name="Nelson W.C."/>
            <person name="Nierman W.C."/>
            <person name="Beanan M.J."/>
            <person name="Brinkac L.M."/>
            <person name="Daugherty S.C."/>
            <person name="Dodson R.J."/>
            <person name="Durkin A.S."/>
            <person name="Madupu R."/>
            <person name="Haft D.H."/>
            <person name="Selengut J."/>
            <person name="Van Aken S.E."/>
            <person name="Khouri H.M."/>
            <person name="Fedorova N."/>
            <person name="Forberger H.A."/>
            <person name="Tran B."/>
            <person name="Kathariou S."/>
            <person name="Wonderling L.D."/>
            <person name="Uhlich G.A."/>
            <person name="Bayles D.O."/>
            <person name="Luchansky J.B."/>
            <person name="Fraser C.M."/>
        </authorList>
    </citation>
    <scope>NUCLEOTIDE SEQUENCE [LARGE SCALE GENOMIC DNA]</scope>
    <source>
        <strain>F2365</strain>
    </source>
</reference>
<dbReference type="EC" id="2.7.2.8" evidence="1"/>
<dbReference type="EMBL" id="AE017262">
    <property type="protein sequence ID" value="AAT04386.1"/>
    <property type="molecule type" value="Genomic_DNA"/>
</dbReference>
<dbReference type="RefSeq" id="WP_003726000.1">
    <property type="nucleotide sequence ID" value="NC_002973.6"/>
</dbReference>
<dbReference type="SMR" id="Q71Z78"/>
<dbReference type="KEGG" id="lmf:LMOf2365_1611"/>
<dbReference type="HOGENOM" id="CLU_053680_1_0_9"/>
<dbReference type="UniPathway" id="UPA00068">
    <property type="reaction ID" value="UER00107"/>
</dbReference>
<dbReference type="GO" id="GO:0005737">
    <property type="term" value="C:cytoplasm"/>
    <property type="evidence" value="ECO:0007669"/>
    <property type="project" value="UniProtKB-SubCell"/>
</dbReference>
<dbReference type="GO" id="GO:0003991">
    <property type="term" value="F:acetylglutamate kinase activity"/>
    <property type="evidence" value="ECO:0007669"/>
    <property type="project" value="UniProtKB-UniRule"/>
</dbReference>
<dbReference type="GO" id="GO:0005524">
    <property type="term" value="F:ATP binding"/>
    <property type="evidence" value="ECO:0007669"/>
    <property type="project" value="UniProtKB-UniRule"/>
</dbReference>
<dbReference type="GO" id="GO:0042450">
    <property type="term" value="P:arginine biosynthetic process via ornithine"/>
    <property type="evidence" value="ECO:0007669"/>
    <property type="project" value="UniProtKB-UniRule"/>
</dbReference>
<dbReference type="GO" id="GO:0006526">
    <property type="term" value="P:L-arginine biosynthetic process"/>
    <property type="evidence" value="ECO:0007669"/>
    <property type="project" value="UniProtKB-UniPathway"/>
</dbReference>
<dbReference type="CDD" id="cd04238">
    <property type="entry name" value="AAK_NAGK-like"/>
    <property type="match status" value="1"/>
</dbReference>
<dbReference type="FunFam" id="3.40.1160.10:FF:000047">
    <property type="entry name" value="Acetylglutamate kinase"/>
    <property type="match status" value="1"/>
</dbReference>
<dbReference type="Gene3D" id="3.40.1160.10">
    <property type="entry name" value="Acetylglutamate kinase-like"/>
    <property type="match status" value="1"/>
</dbReference>
<dbReference type="HAMAP" id="MF_00082">
    <property type="entry name" value="ArgB"/>
    <property type="match status" value="1"/>
</dbReference>
<dbReference type="InterPro" id="IPR036393">
    <property type="entry name" value="AceGlu_kinase-like_sf"/>
</dbReference>
<dbReference type="InterPro" id="IPR004662">
    <property type="entry name" value="AcgluKinase_fam"/>
</dbReference>
<dbReference type="InterPro" id="IPR037528">
    <property type="entry name" value="ArgB"/>
</dbReference>
<dbReference type="InterPro" id="IPR001048">
    <property type="entry name" value="Asp/Glu/Uridylate_kinase"/>
</dbReference>
<dbReference type="NCBIfam" id="TIGR00761">
    <property type="entry name" value="argB"/>
    <property type="match status" value="1"/>
</dbReference>
<dbReference type="PANTHER" id="PTHR23342">
    <property type="entry name" value="N-ACETYLGLUTAMATE SYNTHASE"/>
    <property type="match status" value="1"/>
</dbReference>
<dbReference type="PANTHER" id="PTHR23342:SF0">
    <property type="entry name" value="N-ACETYLGLUTAMATE SYNTHASE, MITOCHONDRIAL"/>
    <property type="match status" value="1"/>
</dbReference>
<dbReference type="Pfam" id="PF00696">
    <property type="entry name" value="AA_kinase"/>
    <property type="match status" value="1"/>
</dbReference>
<dbReference type="PIRSF" id="PIRSF000728">
    <property type="entry name" value="NAGK"/>
    <property type="match status" value="1"/>
</dbReference>
<dbReference type="SUPFAM" id="SSF53633">
    <property type="entry name" value="Carbamate kinase-like"/>
    <property type="match status" value="1"/>
</dbReference>
<evidence type="ECO:0000255" key="1">
    <source>
        <dbReference type="HAMAP-Rule" id="MF_00082"/>
    </source>
</evidence>
<accession>Q71Z78</accession>
<feature type="chain" id="PRO_0000112628" description="Acetylglutamate kinase">
    <location>
        <begin position="1"/>
        <end position="250"/>
    </location>
</feature>
<feature type="binding site" evidence="1">
    <location>
        <begin position="41"/>
        <end position="42"/>
    </location>
    <ligand>
        <name>substrate</name>
    </ligand>
</feature>
<feature type="binding site" evidence="1">
    <location>
        <position position="63"/>
    </location>
    <ligand>
        <name>substrate</name>
    </ligand>
</feature>
<feature type="binding site" evidence="1">
    <location>
        <position position="156"/>
    </location>
    <ligand>
        <name>substrate</name>
    </ligand>
</feature>
<feature type="site" description="Transition state stabilizer" evidence="1">
    <location>
        <position position="8"/>
    </location>
</feature>
<feature type="site" description="Transition state stabilizer" evidence="1">
    <location>
        <position position="215"/>
    </location>
</feature>
<keyword id="KW-0028">Amino-acid biosynthesis</keyword>
<keyword id="KW-0055">Arginine biosynthesis</keyword>
<keyword id="KW-0067">ATP-binding</keyword>
<keyword id="KW-0963">Cytoplasm</keyword>
<keyword id="KW-0418">Kinase</keyword>
<keyword id="KW-0547">Nucleotide-binding</keyword>
<keyword id="KW-0808">Transferase</keyword>
<proteinExistence type="inferred from homology"/>
<organism>
    <name type="scientific">Listeria monocytogenes serotype 4b (strain F2365)</name>
    <dbReference type="NCBI Taxonomy" id="265669"/>
    <lineage>
        <taxon>Bacteria</taxon>
        <taxon>Bacillati</taxon>
        <taxon>Bacillota</taxon>
        <taxon>Bacilli</taxon>
        <taxon>Bacillales</taxon>
        <taxon>Listeriaceae</taxon>
        <taxon>Listeria</taxon>
    </lineage>
</organism>